<keyword id="KW-0687">Ribonucleoprotein</keyword>
<keyword id="KW-0689">Ribosomal protein</keyword>
<keyword id="KW-0694">RNA-binding</keyword>
<keyword id="KW-0699">rRNA-binding</keyword>
<reference key="1">
    <citation type="journal article" date="2002" name="Science">
        <title>50 million years of genomic stasis in endosymbiotic bacteria.</title>
        <authorList>
            <person name="Tamas I."/>
            <person name="Klasson L."/>
            <person name="Canbaeck B."/>
            <person name="Naeslund A.K."/>
            <person name="Eriksson A.-S."/>
            <person name="Wernegreen J.J."/>
            <person name="Sandstroem J.P."/>
            <person name="Moran N.A."/>
            <person name="Andersson S.G.E."/>
        </authorList>
    </citation>
    <scope>NUCLEOTIDE SEQUENCE [LARGE SCALE GENOMIC DNA]</scope>
    <source>
        <strain>Sg</strain>
    </source>
</reference>
<sequence>MISQERFLKVLLSPHISEKSSISMEKFNTVVLKVSRNTTKNEIKFAVQNLFNIQVESVKTVYVKGKKKRQSNRIIYRSDWKKAYIKVKKGQNLDFMSNIE</sequence>
<proteinExistence type="inferred from homology"/>
<name>RL23_BUCAP</name>
<feature type="chain" id="PRO_0000129401" description="Large ribosomal subunit protein uL23">
    <location>
        <begin position="1"/>
        <end position="100"/>
    </location>
</feature>
<gene>
    <name evidence="1" type="primary">rplW</name>
    <name type="ordered locus">BUsg_503</name>
</gene>
<organism>
    <name type="scientific">Buchnera aphidicola subsp. Schizaphis graminum (strain Sg)</name>
    <dbReference type="NCBI Taxonomy" id="198804"/>
    <lineage>
        <taxon>Bacteria</taxon>
        <taxon>Pseudomonadati</taxon>
        <taxon>Pseudomonadota</taxon>
        <taxon>Gammaproteobacteria</taxon>
        <taxon>Enterobacterales</taxon>
        <taxon>Erwiniaceae</taxon>
        <taxon>Buchnera</taxon>
    </lineage>
</organism>
<evidence type="ECO:0000255" key="1">
    <source>
        <dbReference type="HAMAP-Rule" id="MF_01369"/>
    </source>
</evidence>
<evidence type="ECO:0000305" key="2"/>
<comment type="function">
    <text evidence="1">One of the early assembly proteins it binds 23S rRNA. One of the proteins that surrounds the polypeptide exit tunnel on the outside of the ribosome. Forms the main docking site for trigger factor binding to the ribosome.</text>
</comment>
<comment type="subunit">
    <text evidence="1">Part of the 50S ribosomal subunit. Contacts protein L29, and trigger factor when it is bound to the ribosome.</text>
</comment>
<comment type="similarity">
    <text evidence="1">Belongs to the universal ribosomal protein uL23 family.</text>
</comment>
<protein>
    <recommendedName>
        <fullName evidence="1">Large ribosomal subunit protein uL23</fullName>
    </recommendedName>
    <alternativeName>
        <fullName evidence="2">50S ribosomal protein L23</fullName>
    </alternativeName>
</protein>
<dbReference type="EMBL" id="AE013218">
    <property type="protein sequence ID" value="AAM68046.1"/>
    <property type="molecule type" value="Genomic_DNA"/>
</dbReference>
<dbReference type="RefSeq" id="WP_011054012.1">
    <property type="nucleotide sequence ID" value="NC_004061.1"/>
</dbReference>
<dbReference type="SMR" id="Q8K952"/>
<dbReference type="STRING" id="198804.BUsg_503"/>
<dbReference type="GeneID" id="93003978"/>
<dbReference type="KEGG" id="bas:BUsg_503"/>
<dbReference type="eggNOG" id="COG0089">
    <property type="taxonomic scope" value="Bacteria"/>
</dbReference>
<dbReference type="HOGENOM" id="CLU_037562_3_1_6"/>
<dbReference type="Proteomes" id="UP000000416">
    <property type="component" value="Chromosome"/>
</dbReference>
<dbReference type="GO" id="GO:1990904">
    <property type="term" value="C:ribonucleoprotein complex"/>
    <property type="evidence" value="ECO:0007669"/>
    <property type="project" value="UniProtKB-KW"/>
</dbReference>
<dbReference type="GO" id="GO:0005840">
    <property type="term" value="C:ribosome"/>
    <property type="evidence" value="ECO:0007669"/>
    <property type="project" value="UniProtKB-KW"/>
</dbReference>
<dbReference type="GO" id="GO:0019843">
    <property type="term" value="F:rRNA binding"/>
    <property type="evidence" value="ECO:0007669"/>
    <property type="project" value="UniProtKB-UniRule"/>
</dbReference>
<dbReference type="GO" id="GO:0003735">
    <property type="term" value="F:structural constituent of ribosome"/>
    <property type="evidence" value="ECO:0007669"/>
    <property type="project" value="InterPro"/>
</dbReference>
<dbReference type="GO" id="GO:0006412">
    <property type="term" value="P:translation"/>
    <property type="evidence" value="ECO:0007669"/>
    <property type="project" value="UniProtKB-UniRule"/>
</dbReference>
<dbReference type="FunFam" id="3.30.70.330:FF:000001">
    <property type="entry name" value="50S ribosomal protein L23"/>
    <property type="match status" value="1"/>
</dbReference>
<dbReference type="Gene3D" id="3.30.70.330">
    <property type="match status" value="1"/>
</dbReference>
<dbReference type="HAMAP" id="MF_01369_B">
    <property type="entry name" value="Ribosomal_uL23_B"/>
    <property type="match status" value="1"/>
</dbReference>
<dbReference type="InterPro" id="IPR012677">
    <property type="entry name" value="Nucleotide-bd_a/b_plait_sf"/>
</dbReference>
<dbReference type="InterPro" id="IPR013025">
    <property type="entry name" value="Ribosomal_uL23-like"/>
</dbReference>
<dbReference type="InterPro" id="IPR012678">
    <property type="entry name" value="Ribosomal_uL23/eL15/eS24_sf"/>
</dbReference>
<dbReference type="NCBIfam" id="NF004358">
    <property type="entry name" value="PRK05738.1-1"/>
    <property type="match status" value="1"/>
</dbReference>
<dbReference type="NCBIfam" id="NF004359">
    <property type="entry name" value="PRK05738.1-3"/>
    <property type="match status" value="1"/>
</dbReference>
<dbReference type="NCBIfam" id="NF004363">
    <property type="entry name" value="PRK05738.2-4"/>
    <property type="match status" value="1"/>
</dbReference>
<dbReference type="PANTHER" id="PTHR11620">
    <property type="entry name" value="60S RIBOSOMAL PROTEIN L23A"/>
    <property type="match status" value="1"/>
</dbReference>
<dbReference type="Pfam" id="PF00276">
    <property type="entry name" value="Ribosomal_L23"/>
    <property type="match status" value="1"/>
</dbReference>
<dbReference type="SUPFAM" id="SSF54189">
    <property type="entry name" value="Ribosomal proteins S24e, L23 and L15e"/>
    <property type="match status" value="1"/>
</dbReference>
<accession>Q8K952</accession>